<name>HSLV_SHEPC</name>
<comment type="function">
    <text evidence="1">Protease subunit of a proteasome-like degradation complex believed to be a general protein degrading machinery.</text>
</comment>
<comment type="catalytic activity">
    <reaction evidence="1">
        <text>ATP-dependent cleavage of peptide bonds with broad specificity.</text>
        <dbReference type="EC" id="3.4.25.2"/>
    </reaction>
</comment>
<comment type="activity regulation">
    <text evidence="1">Allosterically activated by HslU binding.</text>
</comment>
<comment type="subunit">
    <text evidence="1">A double ring-shaped homohexamer of HslV is capped on each side by a ring-shaped HslU homohexamer. The assembly of the HslU/HslV complex is dependent on binding of ATP.</text>
</comment>
<comment type="subcellular location">
    <subcellularLocation>
        <location evidence="1">Cytoplasm</location>
    </subcellularLocation>
</comment>
<comment type="similarity">
    <text evidence="1">Belongs to the peptidase T1B family. HslV subfamily.</text>
</comment>
<keyword id="KW-0021">Allosteric enzyme</keyword>
<keyword id="KW-0963">Cytoplasm</keyword>
<keyword id="KW-0378">Hydrolase</keyword>
<keyword id="KW-0479">Metal-binding</keyword>
<keyword id="KW-0645">Protease</keyword>
<keyword id="KW-0915">Sodium</keyword>
<keyword id="KW-0888">Threonine protease</keyword>
<evidence type="ECO:0000255" key="1">
    <source>
        <dbReference type="HAMAP-Rule" id="MF_00248"/>
    </source>
</evidence>
<feature type="chain" id="PRO_1000012670" description="ATP-dependent protease subunit HslV">
    <location>
        <begin position="1"/>
        <end position="174"/>
    </location>
</feature>
<feature type="active site" evidence="1">
    <location>
        <position position="2"/>
    </location>
</feature>
<feature type="binding site" evidence="1">
    <location>
        <position position="157"/>
    </location>
    <ligand>
        <name>Na(+)</name>
        <dbReference type="ChEBI" id="CHEBI:29101"/>
    </ligand>
</feature>
<feature type="binding site" evidence="1">
    <location>
        <position position="160"/>
    </location>
    <ligand>
        <name>Na(+)</name>
        <dbReference type="ChEBI" id="CHEBI:29101"/>
    </ligand>
</feature>
<feature type="binding site" evidence="1">
    <location>
        <position position="163"/>
    </location>
    <ligand>
        <name>Na(+)</name>
        <dbReference type="ChEBI" id="CHEBI:29101"/>
    </ligand>
</feature>
<dbReference type="EC" id="3.4.25.2" evidence="1"/>
<dbReference type="EMBL" id="CP000681">
    <property type="protein sequence ID" value="ABP74261.1"/>
    <property type="molecule type" value="Genomic_DNA"/>
</dbReference>
<dbReference type="SMR" id="A4Y2S8"/>
<dbReference type="STRING" id="319224.Sputcn32_0529"/>
<dbReference type="MEROPS" id="T01.006"/>
<dbReference type="KEGG" id="spc:Sputcn32_0529"/>
<dbReference type="eggNOG" id="COG5405">
    <property type="taxonomic scope" value="Bacteria"/>
</dbReference>
<dbReference type="HOGENOM" id="CLU_093872_1_0_6"/>
<dbReference type="GO" id="GO:0009376">
    <property type="term" value="C:HslUV protease complex"/>
    <property type="evidence" value="ECO:0007669"/>
    <property type="project" value="UniProtKB-UniRule"/>
</dbReference>
<dbReference type="GO" id="GO:0005839">
    <property type="term" value="C:proteasome core complex"/>
    <property type="evidence" value="ECO:0007669"/>
    <property type="project" value="InterPro"/>
</dbReference>
<dbReference type="GO" id="GO:0046872">
    <property type="term" value="F:metal ion binding"/>
    <property type="evidence" value="ECO:0007669"/>
    <property type="project" value="UniProtKB-KW"/>
</dbReference>
<dbReference type="GO" id="GO:0004298">
    <property type="term" value="F:threonine-type endopeptidase activity"/>
    <property type="evidence" value="ECO:0007669"/>
    <property type="project" value="UniProtKB-KW"/>
</dbReference>
<dbReference type="GO" id="GO:0051603">
    <property type="term" value="P:proteolysis involved in protein catabolic process"/>
    <property type="evidence" value="ECO:0007669"/>
    <property type="project" value="InterPro"/>
</dbReference>
<dbReference type="CDD" id="cd01913">
    <property type="entry name" value="protease_HslV"/>
    <property type="match status" value="1"/>
</dbReference>
<dbReference type="FunFam" id="3.60.20.10:FF:000002">
    <property type="entry name" value="ATP-dependent protease subunit HslV"/>
    <property type="match status" value="1"/>
</dbReference>
<dbReference type="Gene3D" id="3.60.20.10">
    <property type="entry name" value="Glutamine Phosphoribosylpyrophosphate, subunit 1, domain 1"/>
    <property type="match status" value="1"/>
</dbReference>
<dbReference type="HAMAP" id="MF_00248">
    <property type="entry name" value="HslV"/>
    <property type="match status" value="1"/>
</dbReference>
<dbReference type="InterPro" id="IPR022281">
    <property type="entry name" value="ATP-dep_Prtase_HsIV_su"/>
</dbReference>
<dbReference type="InterPro" id="IPR029055">
    <property type="entry name" value="Ntn_hydrolases_N"/>
</dbReference>
<dbReference type="InterPro" id="IPR001353">
    <property type="entry name" value="Proteasome_sua/b"/>
</dbReference>
<dbReference type="InterPro" id="IPR023333">
    <property type="entry name" value="Proteasome_suB-type"/>
</dbReference>
<dbReference type="NCBIfam" id="TIGR03692">
    <property type="entry name" value="ATP_dep_HslV"/>
    <property type="match status" value="1"/>
</dbReference>
<dbReference type="NCBIfam" id="NF003964">
    <property type="entry name" value="PRK05456.1"/>
    <property type="match status" value="1"/>
</dbReference>
<dbReference type="PANTHER" id="PTHR32194:SF0">
    <property type="entry name" value="ATP-DEPENDENT PROTEASE SUBUNIT HSLV"/>
    <property type="match status" value="1"/>
</dbReference>
<dbReference type="PANTHER" id="PTHR32194">
    <property type="entry name" value="METALLOPROTEASE TLDD"/>
    <property type="match status" value="1"/>
</dbReference>
<dbReference type="Pfam" id="PF00227">
    <property type="entry name" value="Proteasome"/>
    <property type="match status" value="1"/>
</dbReference>
<dbReference type="PIRSF" id="PIRSF039093">
    <property type="entry name" value="HslV"/>
    <property type="match status" value="1"/>
</dbReference>
<dbReference type="SUPFAM" id="SSF56235">
    <property type="entry name" value="N-terminal nucleophile aminohydrolases (Ntn hydrolases)"/>
    <property type="match status" value="1"/>
</dbReference>
<dbReference type="PROSITE" id="PS51476">
    <property type="entry name" value="PROTEASOME_BETA_2"/>
    <property type="match status" value="1"/>
</dbReference>
<proteinExistence type="inferred from homology"/>
<protein>
    <recommendedName>
        <fullName evidence="1">ATP-dependent protease subunit HslV</fullName>
        <ecNumber evidence="1">3.4.25.2</ecNumber>
    </recommendedName>
</protein>
<reference key="1">
    <citation type="submission" date="2007-04" db="EMBL/GenBank/DDBJ databases">
        <title>Complete sequence of Shewanella putrefaciens CN-32.</title>
        <authorList>
            <consortium name="US DOE Joint Genome Institute"/>
            <person name="Copeland A."/>
            <person name="Lucas S."/>
            <person name="Lapidus A."/>
            <person name="Barry K."/>
            <person name="Detter J.C."/>
            <person name="Glavina del Rio T."/>
            <person name="Hammon N."/>
            <person name="Israni S."/>
            <person name="Dalin E."/>
            <person name="Tice H."/>
            <person name="Pitluck S."/>
            <person name="Chain P."/>
            <person name="Malfatti S."/>
            <person name="Shin M."/>
            <person name="Vergez L."/>
            <person name="Schmutz J."/>
            <person name="Larimer F."/>
            <person name="Land M."/>
            <person name="Hauser L."/>
            <person name="Kyrpides N."/>
            <person name="Mikhailova N."/>
            <person name="Romine M.F."/>
            <person name="Fredrickson J."/>
            <person name="Tiedje J."/>
            <person name="Richardson P."/>
        </authorList>
    </citation>
    <scope>NUCLEOTIDE SEQUENCE [LARGE SCALE GENOMIC DNA]</scope>
    <source>
        <strain>CN-32 / ATCC BAA-453</strain>
    </source>
</reference>
<accession>A4Y2S8</accession>
<gene>
    <name evidence="1" type="primary">hslV</name>
    <name type="ordered locus">Sputcn32_0529</name>
</gene>
<sequence>MTTIVSVRRNNQVVIAGDGQVSLGNTVMKGNAKKVRRLYHNKVLAGFAGGTADAFTLFERFEAKLEMHQGHLLRSAVELAKDWRTDRMLRKLEAMLVVADAEASLIITGNGDVVQPEYDLVAIGSGGNYAQAAALALLQNTELSALEIAEKSLTIAGDICVFTNQFKTIEELNY</sequence>
<organism>
    <name type="scientific">Shewanella putrefaciens (strain CN-32 / ATCC BAA-453)</name>
    <dbReference type="NCBI Taxonomy" id="319224"/>
    <lineage>
        <taxon>Bacteria</taxon>
        <taxon>Pseudomonadati</taxon>
        <taxon>Pseudomonadota</taxon>
        <taxon>Gammaproteobacteria</taxon>
        <taxon>Alteromonadales</taxon>
        <taxon>Shewanellaceae</taxon>
        <taxon>Shewanella</taxon>
    </lineage>
</organism>